<gene>
    <name type="ordered locus">CCNA_02521</name>
</gene>
<name>YQGF_CAUVN</name>
<dbReference type="EC" id="3.1.-.-" evidence="1"/>
<dbReference type="EMBL" id="CP001340">
    <property type="protein sequence ID" value="ACL95986.1"/>
    <property type="molecule type" value="Genomic_DNA"/>
</dbReference>
<dbReference type="RefSeq" id="YP_002517894.1">
    <property type="nucleotide sequence ID" value="NC_011916.1"/>
</dbReference>
<dbReference type="SMR" id="B8GZJ7"/>
<dbReference type="GeneID" id="7330674"/>
<dbReference type="KEGG" id="ccs:CCNA_02521"/>
<dbReference type="PATRIC" id="fig|565050.3.peg.2474"/>
<dbReference type="HOGENOM" id="CLU_098240_1_1_5"/>
<dbReference type="OrthoDB" id="9796140at2"/>
<dbReference type="PhylomeDB" id="B8GZJ7"/>
<dbReference type="Proteomes" id="UP000001364">
    <property type="component" value="Chromosome"/>
</dbReference>
<dbReference type="GO" id="GO:0005829">
    <property type="term" value="C:cytosol"/>
    <property type="evidence" value="ECO:0007669"/>
    <property type="project" value="TreeGrafter"/>
</dbReference>
<dbReference type="GO" id="GO:0004518">
    <property type="term" value="F:nuclease activity"/>
    <property type="evidence" value="ECO:0007669"/>
    <property type="project" value="UniProtKB-KW"/>
</dbReference>
<dbReference type="GO" id="GO:0000967">
    <property type="term" value="P:rRNA 5'-end processing"/>
    <property type="evidence" value="ECO:0007669"/>
    <property type="project" value="UniProtKB-UniRule"/>
</dbReference>
<dbReference type="CDD" id="cd16964">
    <property type="entry name" value="YqgF"/>
    <property type="match status" value="1"/>
</dbReference>
<dbReference type="Gene3D" id="3.30.420.140">
    <property type="entry name" value="YqgF/RNase H-like domain"/>
    <property type="match status" value="1"/>
</dbReference>
<dbReference type="HAMAP" id="MF_00651">
    <property type="entry name" value="Nuclease_YqgF"/>
    <property type="match status" value="1"/>
</dbReference>
<dbReference type="InterPro" id="IPR012337">
    <property type="entry name" value="RNaseH-like_sf"/>
</dbReference>
<dbReference type="InterPro" id="IPR005227">
    <property type="entry name" value="YqgF"/>
</dbReference>
<dbReference type="InterPro" id="IPR006641">
    <property type="entry name" value="YqgF/RNaseH-like_dom"/>
</dbReference>
<dbReference type="InterPro" id="IPR037027">
    <property type="entry name" value="YqgF/RNaseH-like_dom_sf"/>
</dbReference>
<dbReference type="NCBIfam" id="TIGR00250">
    <property type="entry name" value="RNAse_H_YqgF"/>
    <property type="match status" value="1"/>
</dbReference>
<dbReference type="PANTHER" id="PTHR33317">
    <property type="entry name" value="POLYNUCLEOTIDYL TRANSFERASE, RIBONUCLEASE H-LIKE SUPERFAMILY PROTEIN"/>
    <property type="match status" value="1"/>
</dbReference>
<dbReference type="PANTHER" id="PTHR33317:SF4">
    <property type="entry name" value="POLYNUCLEOTIDYL TRANSFERASE, RIBONUCLEASE H-LIKE SUPERFAMILY PROTEIN"/>
    <property type="match status" value="1"/>
</dbReference>
<dbReference type="Pfam" id="PF03652">
    <property type="entry name" value="RuvX"/>
    <property type="match status" value="1"/>
</dbReference>
<dbReference type="SMART" id="SM00732">
    <property type="entry name" value="YqgFc"/>
    <property type="match status" value="1"/>
</dbReference>
<dbReference type="SUPFAM" id="SSF53098">
    <property type="entry name" value="Ribonuclease H-like"/>
    <property type="match status" value="1"/>
</dbReference>
<comment type="function">
    <text evidence="1">Could be a nuclease involved in processing of the 5'-end of pre-16S rRNA.</text>
</comment>
<comment type="subcellular location">
    <subcellularLocation>
        <location evidence="1">Cytoplasm</location>
    </subcellularLocation>
</comment>
<comment type="similarity">
    <text evidence="1">Belongs to the YqgF nuclease family.</text>
</comment>
<reference key="1">
    <citation type="journal article" date="2010" name="J. Bacteriol.">
        <title>The genetic basis of laboratory adaptation in Caulobacter crescentus.</title>
        <authorList>
            <person name="Marks M.E."/>
            <person name="Castro-Rojas C.M."/>
            <person name="Teiling C."/>
            <person name="Du L."/>
            <person name="Kapatral V."/>
            <person name="Walunas T.L."/>
            <person name="Crosson S."/>
        </authorList>
    </citation>
    <scope>NUCLEOTIDE SEQUENCE [LARGE SCALE GENOMIC DNA]</scope>
    <source>
        <strain>NA1000 / CB15N</strain>
    </source>
</reference>
<organism>
    <name type="scientific">Caulobacter vibrioides (strain NA1000 / CB15N)</name>
    <name type="common">Caulobacter crescentus</name>
    <dbReference type="NCBI Taxonomy" id="565050"/>
    <lineage>
        <taxon>Bacteria</taxon>
        <taxon>Pseudomonadati</taxon>
        <taxon>Pseudomonadota</taxon>
        <taxon>Alphaproteobacteria</taxon>
        <taxon>Caulobacterales</taxon>
        <taxon>Caulobacteraceae</taxon>
        <taxon>Caulobacter</taxon>
    </lineage>
</organism>
<proteinExistence type="inferred from homology"/>
<evidence type="ECO:0000255" key="1">
    <source>
        <dbReference type="HAMAP-Rule" id="MF_00651"/>
    </source>
</evidence>
<keyword id="KW-0963">Cytoplasm</keyword>
<keyword id="KW-0378">Hydrolase</keyword>
<keyword id="KW-0540">Nuclease</keyword>
<keyword id="KW-1185">Reference proteome</keyword>
<keyword id="KW-0690">Ribosome biogenesis</keyword>
<feature type="chain" id="PRO_1000147469" description="Putative pre-16S rRNA nuclease">
    <location>
        <begin position="1"/>
        <end position="156"/>
    </location>
</feature>
<protein>
    <recommendedName>
        <fullName evidence="1">Putative pre-16S rRNA nuclease</fullName>
        <ecNumber evidence="1">3.1.-.-</ecNumber>
    </recommendedName>
</protein>
<accession>B8GZJ7</accession>
<sequence length="156" mass="17142">MPVLDIEDFADALPQYAAVVGLDPGEKTIGVAVSDVTRTVASPLALIEKTKFSKDAEQLFKLMDSRGAVAIVIGLPMNMDGTEGVRCQSNRALGRNLLRLKPDLPITFWDERLSTAAVTRVLIDEHDISRKRRDEVVDKMAAGWILQGALERLRGL</sequence>